<keyword id="KW-1185">Reference proteome</keyword>
<keyword id="KW-0687">Ribonucleoprotein</keyword>
<keyword id="KW-0689">Ribosomal protein</keyword>
<gene>
    <name evidence="1" type="primary">rplL</name>
    <name type="ordered locus">MYPE5730</name>
</gene>
<sequence length="121" mass="12451">MAKLSAKDIIDSLKEMSMLEIKDLIEAIETEFGVSAAAPVAVAAAPAGGAAAPSEVTVTLKDVGGNKVAVIKVVREITGLGLMEAKALVDNAPSKVKEGVKLADAENMKKQFAEAGATVEW</sequence>
<protein>
    <recommendedName>
        <fullName evidence="1">Large ribosomal subunit protein bL12</fullName>
    </recommendedName>
    <alternativeName>
        <fullName evidence="2">50S ribosomal protein L7/L12</fullName>
    </alternativeName>
</protein>
<dbReference type="EMBL" id="BA000026">
    <property type="protein sequence ID" value="BAC44363.1"/>
    <property type="molecule type" value="Genomic_DNA"/>
</dbReference>
<dbReference type="RefSeq" id="WP_011077395.1">
    <property type="nucleotide sequence ID" value="NC_004432.1"/>
</dbReference>
<dbReference type="SMR" id="Q8EVJ1"/>
<dbReference type="FunCoup" id="Q8EVJ1">
    <property type="interactions" value="252"/>
</dbReference>
<dbReference type="STRING" id="272633.gene:10731690"/>
<dbReference type="KEGG" id="mpe:MYPE5730"/>
<dbReference type="eggNOG" id="COG0222">
    <property type="taxonomic scope" value="Bacteria"/>
</dbReference>
<dbReference type="HOGENOM" id="CLU_086499_3_2_14"/>
<dbReference type="InParanoid" id="Q8EVJ1"/>
<dbReference type="Proteomes" id="UP000002522">
    <property type="component" value="Chromosome"/>
</dbReference>
<dbReference type="GO" id="GO:0022625">
    <property type="term" value="C:cytosolic large ribosomal subunit"/>
    <property type="evidence" value="ECO:0007669"/>
    <property type="project" value="TreeGrafter"/>
</dbReference>
<dbReference type="GO" id="GO:0003729">
    <property type="term" value="F:mRNA binding"/>
    <property type="evidence" value="ECO:0007669"/>
    <property type="project" value="TreeGrafter"/>
</dbReference>
<dbReference type="GO" id="GO:0003735">
    <property type="term" value="F:structural constituent of ribosome"/>
    <property type="evidence" value="ECO:0007669"/>
    <property type="project" value="InterPro"/>
</dbReference>
<dbReference type="GO" id="GO:0006412">
    <property type="term" value="P:translation"/>
    <property type="evidence" value="ECO:0007669"/>
    <property type="project" value="UniProtKB-UniRule"/>
</dbReference>
<dbReference type="CDD" id="cd00387">
    <property type="entry name" value="Ribosomal_L7_L12"/>
    <property type="match status" value="1"/>
</dbReference>
<dbReference type="FunFam" id="3.30.1390.10:FF:000001">
    <property type="entry name" value="50S ribosomal protein L7/L12"/>
    <property type="match status" value="1"/>
</dbReference>
<dbReference type="Gene3D" id="3.30.1390.10">
    <property type="match status" value="1"/>
</dbReference>
<dbReference type="Gene3D" id="1.20.5.710">
    <property type="entry name" value="Single helix bin"/>
    <property type="match status" value="1"/>
</dbReference>
<dbReference type="HAMAP" id="MF_00368">
    <property type="entry name" value="Ribosomal_bL12"/>
    <property type="match status" value="1"/>
</dbReference>
<dbReference type="InterPro" id="IPR000206">
    <property type="entry name" value="Ribosomal_bL12"/>
</dbReference>
<dbReference type="InterPro" id="IPR013823">
    <property type="entry name" value="Ribosomal_bL12_C"/>
</dbReference>
<dbReference type="InterPro" id="IPR014719">
    <property type="entry name" value="Ribosomal_bL12_C/ClpS-like"/>
</dbReference>
<dbReference type="InterPro" id="IPR008932">
    <property type="entry name" value="Ribosomal_bL12_oligo"/>
</dbReference>
<dbReference type="InterPro" id="IPR036235">
    <property type="entry name" value="Ribosomal_bL12_oligo_N_sf"/>
</dbReference>
<dbReference type="NCBIfam" id="TIGR00855">
    <property type="entry name" value="L12"/>
    <property type="match status" value="1"/>
</dbReference>
<dbReference type="PANTHER" id="PTHR45987">
    <property type="entry name" value="39S RIBOSOMAL PROTEIN L12"/>
    <property type="match status" value="1"/>
</dbReference>
<dbReference type="PANTHER" id="PTHR45987:SF4">
    <property type="entry name" value="LARGE RIBOSOMAL SUBUNIT PROTEIN BL12M"/>
    <property type="match status" value="1"/>
</dbReference>
<dbReference type="Pfam" id="PF00542">
    <property type="entry name" value="Ribosomal_L12"/>
    <property type="match status" value="1"/>
</dbReference>
<dbReference type="Pfam" id="PF16320">
    <property type="entry name" value="Ribosomal_L12_N"/>
    <property type="match status" value="1"/>
</dbReference>
<dbReference type="SUPFAM" id="SSF54736">
    <property type="entry name" value="ClpS-like"/>
    <property type="match status" value="1"/>
</dbReference>
<dbReference type="SUPFAM" id="SSF48300">
    <property type="entry name" value="Ribosomal protein L7/12, oligomerisation (N-terminal) domain"/>
    <property type="match status" value="1"/>
</dbReference>
<accession>Q8EVJ1</accession>
<evidence type="ECO:0000255" key="1">
    <source>
        <dbReference type="HAMAP-Rule" id="MF_00368"/>
    </source>
</evidence>
<evidence type="ECO:0000305" key="2"/>
<feature type="chain" id="PRO_0000243449" description="Large ribosomal subunit protein bL12">
    <location>
        <begin position="1"/>
        <end position="121"/>
    </location>
</feature>
<name>RL7_MALP2</name>
<proteinExistence type="inferred from homology"/>
<comment type="function">
    <text evidence="1">Forms part of the ribosomal stalk which helps the ribosome interact with GTP-bound translation factors. Is thus essential for accurate translation.</text>
</comment>
<comment type="subunit">
    <text evidence="1">Homodimer. Part of the ribosomal stalk of the 50S ribosomal subunit. Forms a multimeric L10(L12)X complex, where L10 forms an elongated spine to which 2 to 4 L12 dimers bind in a sequential fashion. Binds GTP-bound translation factors.</text>
</comment>
<comment type="similarity">
    <text evidence="1">Belongs to the bacterial ribosomal protein bL12 family.</text>
</comment>
<organism>
    <name type="scientific">Malacoplasma penetrans (strain HF-2)</name>
    <name type="common">Mycoplasma penetrans</name>
    <dbReference type="NCBI Taxonomy" id="272633"/>
    <lineage>
        <taxon>Bacteria</taxon>
        <taxon>Bacillati</taxon>
        <taxon>Mycoplasmatota</taxon>
        <taxon>Mycoplasmoidales</taxon>
        <taxon>Mycoplasmoidaceae</taxon>
        <taxon>Malacoplasma</taxon>
    </lineage>
</organism>
<reference key="1">
    <citation type="journal article" date="2002" name="Nucleic Acids Res.">
        <title>The complete genomic sequence of Mycoplasma penetrans, an intracellular bacterial pathogen in humans.</title>
        <authorList>
            <person name="Sasaki Y."/>
            <person name="Ishikawa J."/>
            <person name="Yamashita A."/>
            <person name="Oshima K."/>
            <person name="Kenri T."/>
            <person name="Furuya K."/>
            <person name="Yoshino C."/>
            <person name="Horino A."/>
            <person name="Shiba T."/>
            <person name="Sasaki T."/>
            <person name="Hattori M."/>
        </authorList>
    </citation>
    <scope>NUCLEOTIDE SEQUENCE [LARGE SCALE GENOMIC DNA]</scope>
    <source>
        <strain>HF-2</strain>
    </source>
</reference>